<accession>P84388</accession>
<name>PLYB1_POLPI</name>
<feature type="peptide" id="PRO_0000044534" description="Polybine-1">
    <location>
        <begin position="1"/>
        <end position="14"/>
    </location>
</feature>
<feature type="modified residue" description="N-acetylserine" evidence="1">
    <location>
        <position position="1"/>
    </location>
</feature>
<proteinExistence type="evidence at protein level"/>
<sequence length="14" mass="1570">SADIVKKLWDNPAL</sequence>
<evidence type="ECO:0000269" key="1">
    <source>
    </source>
</evidence>
<evidence type="ECO:0000303" key="2">
    <source>
    </source>
</evidence>
<evidence type="ECO:0000305" key="3"/>
<organism>
    <name type="scientific">Polybia paulista</name>
    <name type="common">Neotropical social wasp</name>
    <name type="synonym">Swarm-founding polistine wasp</name>
    <dbReference type="NCBI Taxonomy" id="291283"/>
    <lineage>
        <taxon>Eukaryota</taxon>
        <taxon>Metazoa</taxon>
        <taxon>Ecdysozoa</taxon>
        <taxon>Arthropoda</taxon>
        <taxon>Hexapoda</taxon>
        <taxon>Insecta</taxon>
        <taxon>Pterygota</taxon>
        <taxon>Neoptera</taxon>
        <taxon>Endopterygota</taxon>
        <taxon>Hymenoptera</taxon>
        <taxon>Apocrita</taxon>
        <taxon>Aculeata</taxon>
        <taxon>Vespoidea</taxon>
        <taxon>Vespidae</taxon>
        <taxon>Polistinae</taxon>
        <taxon>Epiponini</taxon>
        <taxon>Polybia</taxon>
    </lineage>
</organism>
<comment type="function">
    <text evidence="1">Venom component which lacks hemolytic or antibiotic properties, but produces an inflammatory response via mast cell degranulation and produces a chemotactic effect on leukocytes.</text>
</comment>
<comment type="subcellular location">
    <subcellularLocation>
        <location evidence="1">Secreted</location>
    </subcellularLocation>
</comment>
<comment type="tissue specificity">
    <text evidence="1">Expressed by the venom gland.</text>
</comment>
<comment type="mass spectrometry" mass="1610.18" error="0.29" method="Electrospray" evidence="1">
    <text>Acetylated and with addition of a proton.</text>
</comment>
<keyword id="KW-0007">Acetylation</keyword>
<keyword id="KW-0145">Chemotaxis</keyword>
<keyword id="KW-0903">Direct protein sequencing</keyword>
<keyword id="KW-0467">Mast cell degranulation</keyword>
<keyword id="KW-0964">Secreted</keyword>
<keyword id="KW-0800">Toxin</keyword>
<dbReference type="iPTMnet" id="P84388"/>
<dbReference type="GO" id="GO:0005576">
    <property type="term" value="C:extracellular region"/>
    <property type="evidence" value="ECO:0000314"/>
    <property type="project" value="UniProtKB"/>
</dbReference>
<dbReference type="GO" id="GO:0090729">
    <property type="term" value="F:toxin activity"/>
    <property type="evidence" value="ECO:0007669"/>
    <property type="project" value="UniProtKB-KW"/>
</dbReference>
<dbReference type="GO" id="GO:0006935">
    <property type="term" value="P:chemotaxis"/>
    <property type="evidence" value="ECO:0000314"/>
    <property type="project" value="UniProtKB"/>
</dbReference>
<dbReference type="GO" id="GO:0043306">
    <property type="term" value="P:positive regulation of mast cell degranulation"/>
    <property type="evidence" value="ECO:0000314"/>
    <property type="project" value="UniProtKB"/>
</dbReference>
<reference key="1">
    <citation type="journal article" date="2004" name="Peptides">
        <title>Structural and functional characterization of N-terminally blocked peptides isolated from the venom of the social wasp Polybia paulista.</title>
        <authorList>
            <person name="Ribeiro S.P."/>
            <person name="Mendes M.A."/>
            <person name="Santos L.D."/>
            <person name="Souza B.M."/>
            <person name="Marques M.R."/>
            <person name="Azevedo W.F. Jr."/>
            <person name="Palma M.S."/>
        </authorList>
    </citation>
    <scope>PROTEIN SEQUENCE</scope>
    <scope>FUNCTION</scope>
    <scope>SUBCELLULAR LOCATION</scope>
    <scope>TISSUE SPECIFICITY</scope>
    <scope>ACETYLATION AT SER-1</scope>
    <scope>MASS SPECTROMETRY</scope>
    <source>
        <tissue>Venom gland</tissue>
    </source>
</reference>
<protein>
    <recommendedName>
        <fullName evidence="3">Polybine-1</fullName>
    </recommendedName>
    <alternativeName>
        <fullName evidence="2">Polybine-I</fullName>
    </alternativeName>
</protein>